<proteinExistence type="inferred from homology"/>
<reference key="1">
    <citation type="journal article" date="2005" name="Proc. Natl. Acad. Sci. U.S.A.">
        <title>The psychrophilic lifestyle as revealed by the genome sequence of Colwellia psychrerythraea 34H through genomic and proteomic analyses.</title>
        <authorList>
            <person name="Methe B.A."/>
            <person name="Nelson K.E."/>
            <person name="Deming J.W."/>
            <person name="Momen B."/>
            <person name="Melamud E."/>
            <person name="Zhang X."/>
            <person name="Moult J."/>
            <person name="Madupu R."/>
            <person name="Nelson W.C."/>
            <person name="Dodson R.J."/>
            <person name="Brinkac L.M."/>
            <person name="Daugherty S.C."/>
            <person name="Durkin A.S."/>
            <person name="DeBoy R.T."/>
            <person name="Kolonay J.F."/>
            <person name="Sullivan S.A."/>
            <person name="Zhou L."/>
            <person name="Davidsen T.M."/>
            <person name="Wu M."/>
            <person name="Huston A.L."/>
            <person name="Lewis M."/>
            <person name="Weaver B."/>
            <person name="Weidman J.F."/>
            <person name="Khouri H."/>
            <person name="Utterback T.R."/>
            <person name="Feldblyum T.V."/>
            <person name="Fraser C.M."/>
        </authorList>
    </citation>
    <scope>NUCLEOTIDE SEQUENCE [LARGE SCALE GENOMIC DNA]</scope>
    <source>
        <strain>34H / ATCC BAA-681</strain>
    </source>
</reference>
<dbReference type="EMBL" id="CP000083">
    <property type="protein sequence ID" value="AAZ28329.1"/>
    <property type="molecule type" value="Genomic_DNA"/>
</dbReference>
<dbReference type="RefSeq" id="WP_011042390.1">
    <property type="nucleotide sequence ID" value="NC_003910.7"/>
</dbReference>
<dbReference type="SMR" id="Q485G9"/>
<dbReference type="STRING" id="167879.CPS_1554"/>
<dbReference type="KEGG" id="cps:CPS_1554"/>
<dbReference type="HOGENOM" id="CLU_047155_0_2_6"/>
<dbReference type="Proteomes" id="UP000000547">
    <property type="component" value="Chromosome"/>
</dbReference>
<dbReference type="GO" id="GO:0005737">
    <property type="term" value="C:cytoplasm"/>
    <property type="evidence" value="ECO:0007669"/>
    <property type="project" value="UniProtKB-SubCell"/>
</dbReference>
<dbReference type="GO" id="GO:0003746">
    <property type="term" value="F:translation elongation factor activity"/>
    <property type="evidence" value="ECO:0007669"/>
    <property type="project" value="UniProtKB-UniRule"/>
</dbReference>
<dbReference type="CDD" id="cd14275">
    <property type="entry name" value="UBA_EF-Ts"/>
    <property type="match status" value="1"/>
</dbReference>
<dbReference type="FunFam" id="1.10.286.20:FF:000001">
    <property type="entry name" value="Elongation factor Ts"/>
    <property type="match status" value="1"/>
</dbReference>
<dbReference type="FunFam" id="1.10.8.10:FF:000001">
    <property type="entry name" value="Elongation factor Ts"/>
    <property type="match status" value="1"/>
</dbReference>
<dbReference type="FunFam" id="3.30.479.20:FF:000001">
    <property type="entry name" value="Elongation factor Ts"/>
    <property type="match status" value="1"/>
</dbReference>
<dbReference type="Gene3D" id="1.10.286.20">
    <property type="match status" value="1"/>
</dbReference>
<dbReference type="Gene3D" id="1.10.8.10">
    <property type="entry name" value="DNA helicase RuvA subunit, C-terminal domain"/>
    <property type="match status" value="1"/>
</dbReference>
<dbReference type="Gene3D" id="3.30.479.20">
    <property type="entry name" value="Elongation factor Ts, dimerisation domain"/>
    <property type="match status" value="2"/>
</dbReference>
<dbReference type="HAMAP" id="MF_00050">
    <property type="entry name" value="EF_Ts"/>
    <property type="match status" value="1"/>
</dbReference>
<dbReference type="InterPro" id="IPR036402">
    <property type="entry name" value="EF-Ts_dimer_sf"/>
</dbReference>
<dbReference type="InterPro" id="IPR001816">
    <property type="entry name" value="Transl_elong_EFTs/EF1B"/>
</dbReference>
<dbReference type="InterPro" id="IPR014039">
    <property type="entry name" value="Transl_elong_EFTs/EF1B_dimer"/>
</dbReference>
<dbReference type="InterPro" id="IPR018101">
    <property type="entry name" value="Transl_elong_Ts_CS"/>
</dbReference>
<dbReference type="InterPro" id="IPR009060">
    <property type="entry name" value="UBA-like_sf"/>
</dbReference>
<dbReference type="NCBIfam" id="TIGR00116">
    <property type="entry name" value="tsf"/>
    <property type="match status" value="1"/>
</dbReference>
<dbReference type="PANTHER" id="PTHR11741">
    <property type="entry name" value="ELONGATION FACTOR TS"/>
    <property type="match status" value="1"/>
</dbReference>
<dbReference type="PANTHER" id="PTHR11741:SF0">
    <property type="entry name" value="ELONGATION FACTOR TS, MITOCHONDRIAL"/>
    <property type="match status" value="1"/>
</dbReference>
<dbReference type="Pfam" id="PF00889">
    <property type="entry name" value="EF_TS"/>
    <property type="match status" value="1"/>
</dbReference>
<dbReference type="SUPFAM" id="SSF54713">
    <property type="entry name" value="Elongation factor Ts (EF-Ts), dimerisation domain"/>
    <property type="match status" value="2"/>
</dbReference>
<dbReference type="SUPFAM" id="SSF46934">
    <property type="entry name" value="UBA-like"/>
    <property type="match status" value="1"/>
</dbReference>
<dbReference type="PROSITE" id="PS01127">
    <property type="entry name" value="EF_TS_2"/>
    <property type="match status" value="1"/>
</dbReference>
<sequence>MAITAAMVKELRERTAAGMMDCKNALVEAEGDMELAIENMRKNGQAKAAKKAGNIAAEGAILIKTTDGLAALVEVNCQTDFVAKDDNFLGFANEVADAALASKVTIAELQAQFEEKRITLVTKIGENINIRRVEYVEGANLASYSHGATIGVVVAGEGDAESLKHIAMHVAASKPEFLTPDDVPADVVANEKRIQIEMAMNEGKPQEIAEKMVTGRMKKFTGEVSLTGQAFIMEPKKTVGVILTEKGITVSNFVRLEVGEGIEKKEEDFAAEVEAQIAAAKA</sequence>
<organism>
    <name type="scientific">Colwellia psychrerythraea (strain 34H / ATCC BAA-681)</name>
    <name type="common">Vibrio psychroerythus</name>
    <dbReference type="NCBI Taxonomy" id="167879"/>
    <lineage>
        <taxon>Bacteria</taxon>
        <taxon>Pseudomonadati</taxon>
        <taxon>Pseudomonadota</taxon>
        <taxon>Gammaproteobacteria</taxon>
        <taxon>Alteromonadales</taxon>
        <taxon>Colwelliaceae</taxon>
        <taxon>Colwellia</taxon>
    </lineage>
</organism>
<gene>
    <name evidence="1" type="primary">tsf</name>
    <name type="ordered locus">CPS_1554</name>
</gene>
<accession>Q485G9</accession>
<evidence type="ECO:0000255" key="1">
    <source>
        <dbReference type="HAMAP-Rule" id="MF_00050"/>
    </source>
</evidence>
<comment type="function">
    <text evidence="1">Associates with the EF-Tu.GDP complex and induces the exchange of GDP to GTP. It remains bound to the aminoacyl-tRNA.EF-Tu.GTP complex up to the GTP hydrolysis stage on the ribosome.</text>
</comment>
<comment type="subcellular location">
    <subcellularLocation>
        <location evidence="1">Cytoplasm</location>
    </subcellularLocation>
</comment>
<comment type="similarity">
    <text evidence="1">Belongs to the EF-Ts family.</text>
</comment>
<keyword id="KW-0963">Cytoplasm</keyword>
<keyword id="KW-0251">Elongation factor</keyword>
<keyword id="KW-0648">Protein biosynthesis</keyword>
<name>EFTS_COLP3</name>
<feature type="chain" id="PRO_0000241475" description="Elongation factor Ts">
    <location>
        <begin position="1"/>
        <end position="282"/>
    </location>
</feature>
<feature type="region of interest" description="Involved in Mg(2+) ion dislocation from EF-Tu" evidence="1">
    <location>
        <begin position="79"/>
        <end position="82"/>
    </location>
</feature>
<protein>
    <recommendedName>
        <fullName evidence="1">Elongation factor Ts</fullName>
        <shortName evidence="1">EF-Ts</shortName>
    </recommendedName>
</protein>